<proteinExistence type="inferred from homology"/>
<accession>P0A2A5</accession>
<accession>O54325</accession>
<keyword id="KW-1185">Reference proteome</keyword>
<keyword id="KW-0687">Ribonucleoprotein</keyword>
<keyword id="KW-0689">Ribosomal protein</keyword>
<comment type="similarity">
    <text evidence="2">Belongs to the bacterial ribosomal protein bL28 family.</text>
</comment>
<sequence length="78" mass="9051">MSRVCQVTGKRPVTGNNRSHALNATKRRFLPNLHSHRFWVESEKRFVTLRVSAKGMRIIDKKGIETVLSELRARGEKY</sequence>
<name>RL28_SALTY</name>
<reference key="1">
    <citation type="journal article" date="1997" name="Mutat. Res.">
        <title>Construction of mutants of Salmonella typhimurium deficient in 8-hydroxyguanine DNA glycosylase and their sensitivities to oxidative mutagens and nitro compounds.</title>
        <authorList>
            <person name="Suzuki M."/>
            <person name="Matsui K."/>
            <person name="Yamada M."/>
            <person name="Kasai H."/>
            <person name="Sofuni T."/>
            <person name="Nohmi T."/>
        </authorList>
    </citation>
    <scope>NUCLEOTIDE SEQUENCE [GENOMIC DNA]</scope>
    <source>
        <strain>LT2</strain>
    </source>
</reference>
<reference key="2">
    <citation type="journal article" date="2001" name="Nature">
        <title>Complete genome sequence of Salmonella enterica serovar Typhimurium LT2.</title>
        <authorList>
            <person name="McClelland M."/>
            <person name="Sanderson K.E."/>
            <person name="Spieth J."/>
            <person name="Clifton S.W."/>
            <person name="Latreille P."/>
            <person name="Courtney L."/>
            <person name="Porwollik S."/>
            <person name="Ali J."/>
            <person name="Dante M."/>
            <person name="Du F."/>
            <person name="Hou S."/>
            <person name="Layman D."/>
            <person name="Leonard S."/>
            <person name="Nguyen C."/>
            <person name="Scott K."/>
            <person name="Holmes A."/>
            <person name="Grewal N."/>
            <person name="Mulvaney E."/>
            <person name="Ryan E."/>
            <person name="Sun H."/>
            <person name="Florea L."/>
            <person name="Miller W."/>
            <person name="Stoneking T."/>
            <person name="Nhan M."/>
            <person name="Waterston R."/>
            <person name="Wilson R.K."/>
        </authorList>
    </citation>
    <scope>NUCLEOTIDE SEQUENCE [LARGE SCALE GENOMIC DNA]</scope>
    <source>
        <strain>LT2 / SGSC1412 / ATCC 700720</strain>
    </source>
</reference>
<protein>
    <recommendedName>
        <fullName evidence="2">Large ribosomal subunit protein bL28</fullName>
    </recommendedName>
    <alternativeName>
        <fullName>50S ribosomal protein L28</fullName>
    </alternativeName>
</protein>
<gene>
    <name type="primary">rpmB</name>
    <name type="ordered locus">STM3728</name>
</gene>
<organism>
    <name type="scientific">Salmonella typhimurium (strain LT2 / SGSC1412 / ATCC 700720)</name>
    <dbReference type="NCBI Taxonomy" id="99287"/>
    <lineage>
        <taxon>Bacteria</taxon>
        <taxon>Pseudomonadati</taxon>
        <taxon>Pseudomonadota</taxon>
        <taxon>Gammaproteobacteria</taxon>
        <taxon>Enterobacterales</taxon>
        <taxon>Enterobacteriaceae</taxon>
        <taxon>Salmonella</taxon>
    </lineage>
</organism>
<dbReference type="EMBL" id="U23405">
    <property type="protein sequence ID" value="AAC01771.1"/>
    <property type="molecule type" value="Genomic_DNA"/>
</dbReference>
<dbReference type="EMBL" id="AE006468">
    <property type="protein sequence ID" value="AAL22587.1"/>
    <property type="molecule type" value="Genomic_DNA"/>
</dbReference>
<dbReference type="RefSeq" id="NP_462628.1">
    <property type="nucleotide sequence ID" value="NC_003197.2"/>
</dbReference>
<dbReference type="RefSeq" id="WP_001519051.1">
    <property type="nucleotide sequence ID" value="NC_003197.2"/>
</dbReference>
<dbReference type="SMR" id="P0A2A5"/>
<dbReference type="STRING" id="99287.STM3728"/>
<dbReference type="PaxDb" id="99287-STM3728"/>
<dbReference type="GeneID" id="1255252"/>
<dbReference type="KEGG" id="stm:STM3728"/>
<dbReference type="PATRIC" id="fig|99287.12.peg.3944"/>
<dbReference type="HOGENOM" id="CLU_064548_3_1_6"/>
<dbReference type="OMA" id="LHTKRIW"/>
<dbReference type="PhylomeDB" id="P0A2A5"/>
<dbReference type="BioCyc" id="SENT99287:STM3728-MONOMER"/>
<dbReference type="Proteomes" id="UP000001014">
    <property type="component" value="Chromosome"/>
</dbReference>
<dbReference type="GO" id="GO:0022625">
    <property type="term" value="C:cytosolic large ribosomal subunit"/>
    <property type="evidence" value="ECO:0000318"/>
    <property type="project" value="GO_Central"/>
</dbReference>
<dbReference type="GO" id="GO:0003735">
    <property type="term" value="F:structural constituent of ribosome"/>
    <property type="evidence" value="ECO:0000318"/>
    <property type="project" value="GO_Central"/>
</dbReference>
<dbReference type="GO" id="GO:0006412">
    <property type="term" value="P:translation"/>
    <property type="evidence" value="ECO:0007669"/>
    <property type="project" value="UniProtKB-UniRule"/>
</dbReference>
<dbReference type="FunFam" id="2.30.170.40:FF:000001">
    <property type="entry name" value="50S ribosomal protein L28"/>
    <property type="match status" value="1"/>
</dbReference>
<dbReference type="Gene3D" id="2.30.170.40">
    <property type="entry name" value="Ribosomal protein L28/L24"/>
    <property type="match status" value="1"/>
</dbReference>
<dbReference type="HAMAP" id="MF_00373">
    <property type="entry name" value="Ribosomal_bL28"/>
    <property type="match status" value="1"/>
</dbReference>
<dbReference type="InterPro" id="IPR026569">
    <property type="entry name" value="Ribosomal_bL28"/>
</dbReference>
<dbReference type="InterPro" id="IPR034704">
    <property type="entry name" value="Ribosomal_bL28/bL31-like_sf"/>
</dbReference>
<dbReference type="InterPro" id="IPR001383">
    <property type="entry name" value="Ribosomal_bL28_bact-type"/>
</dbReference>
<dbReference type="InterPro" id="IPR037147">
    <property type="entry name" value="Ribosomal_bL28_sf"/>
</dbReference>
<dbReference type="NCBIfam" id="TIGR00009">
    <property type="entry name" value="L28"/>
    <property type="match status" value="1"/>
</dbReference>
<dbReference type="PANTHER" id="PTHR13528">
    <property type="entry name" value="39S RIBOSOMAL PROTEIN L28, MITOCHONDRIAL"/>
    <property type="match status" value="1"/>
</dbReference>
<dbReference type="PANTHER" id="PTHR13528:SF2">
    <property type="entry name" value="LARGE RIBOSOMAL SUBUNIT PROTEIN BL28M"/>
    <property type="match status" value="1"/>
</dbReference>
<dbReference type="Pfam" id="PF00830">
    <property type="entry name" value="Ribosomal_L28"/>
    <property type="match status" value="1"/>
</dbReference>
<dbReference type="SUPFAM" id="SSF143800">
    <property type="entry name" value="L28p-like"/>
    <property type="match status" value="1"/>
</dbReference>
<evidence type="ECO:0000250" key="1"/>
<evidence type="ECO:0000305" key="2"/>
<feature type="initiator methionine" description="Removed" evidence="1">
    <location>
        <position position="1"/>
    </location>
</feature>
<feature type="chain" id="PRO_0000178543" description="Large ribosomal subunit protein bL28">
    <location>
        <begin position="2"/>
        <end position="78"/>
    </location>
</feature>